<accession>Q9ZMR8</accession>
<dbReference type="EC" id="4.2.1.24"/>
<dbReference type="EMBL" id="AE001439">
    <property type="protein sequence ID" value="AAD05731.1"/>
    <property type="molecule type" value="Genomic_DNA"/>
</dbReference>
<dbReference type="PIR" id="H71968">
    <property type="entry name" value="H71968"/>
</dbReference>
<dbReference type="RefSeq" id="WP_000476631.1">
    <property type="nucleotide sequence ID" value="NC_000921.1"/>
</dbReference>
<dbReference type="SMR" id="Q9ZMR8"/>
<dbReference type="KEGG" id="hpj:jhp_0150"/>
<dbReference type="PATRIC" id="fig|85963.30.peg.873"/>
<dbReference type="eggNOG" id="COG0113">
    <property type="taxonomic scope" value="Bacteria"/>
</dbReference>
<dbReference type="UniPathway" id="UPA00251">
    <property type="reaction ID" value="UER00318"/>
</dbReference>
<dbReference type="Proteomes" id="UP000000804">
    <property type="component" value="Chromosome"/>
</dbReference>
<dbReference type="GO" id="GO:0005829">
    <property type="term" value="C:cytosol"/>
    <property type="evidence" value="ECO:0007669"/>
    <property type="project" value="TreeGrafter"/>
</dbReference>
<dbReference type="GO" id="GO:0004655">
    <property type="term" value="F:porphobilinogen synthase activity"/>
    <property type="evidence" value="ECO:0007669"/>
    <property type="project" value="UniProtKB-EC"/>
</dbReference>
<dbReference type="GO" id="GO:0008270">
    <property type="term" value="F:zinc ion binding"/>
    <property type="evidence" value="ECO:0007669"/>
    <property type="project" value="TreeGrafter"/>
</dbReference>
<dbReference type="GO" id="GO:0006782">
    <property type="term" value="P:protoporphyrinogen IX biosynthetic process"/>
    <property type="evidence" value="ECO:0007669"/>
    <property type="project" value="UniProtKB-UniPathway"/>
</dbReference>
<dbReference type="CDD" id="cd00384">
    <property type="entry name" value="ALAD_PBGS"/>
    <property type="match status" value="1"/>
</dbReference>
<dbReference type="FunFam" id="3.20.20.70:FF:000019">
    <property type="entry name" value="Delta-aminolevulinic acid dehydratase"/>
    <property type="match status" value="1"/>
</dbReference>
<dbReference type="Gene3D" id="3.20.20.70">
    <property type="entry name" value="Aldolase class I"/>
    <property type="match status" value="1"/>
</dbReference>
<dbReference type="InterPro" id="IPR001731">
    <property type="entry name" value="ALAD"/>
</dbReference>
<dbReference type="InterPro" id="IPR030656">
    <property type="entry name" value="ALAD_AS"/>
</dbReference>
<dbReference type="InterPro" id="IPR013785">
    <property type="entry name" value="Aldolase_TIM"/>
</dbReference>
<dbReference type="NCBIfam" id="NF006762">
    <property type="entry name" value="PRK09283.1"/>
    <property type="match status" value="1"/>
</dbReference>
<dbReference type="PANTHER" id="PTHR11458">
    <property type="entry name" value="DELTA-AMINOLEVULINIC ACID DEHYDRATASE"/>
    <property type="match status" value="1"/>
</dbReference>
<dbReference type="PANTHER" id="PTHR11458:SF0">
    <property type="entry name" value="DELTA-AMINOLEVULINIC ACID DEHYDRATASE"/>
    <property type="match status" value="1"/>
</dbReference>
<dbReference type="Pfam" id="PF00490">
    <property type="entry name" value="ALAD"/>
    <property type="match status" value="1"/>
</dbReference>
<dbReference type="PIRSF" id="PIRSF001415">
    <property type="entry name" value="Porphbilin_synth"/>
    <property type="match status" value="1"/>
</dbReference>
<dbReference type="PRINTS" id="PR00144">
    <property type="entry name" value="DALDHYDRTASE"/>
</dbReference>
<dbReference type="SMART" id="SM01004">
    <property type="entry name" value="ALAD"/>
    <property type="match status" value="1"/>
</dbReference>
<dbReference type="SUPFAM" id="SSF51569">
    <property type="entry name" value="Aldolase"/>
    <property type="match status" value="1"/>
</dbReference>
<dbReference type="PROSITE" id="PS00169">
    <property type="entry name" value="D_ALA_DEHYDRATASE"/>
    <property type="match status" value="1"/>
</dbReference>
<keyword id="KW-0350">Heme biosynthesis</keyword>
<keyword id="KW-0456">Lyase</keyword>
<keyword id="KW-0460">Magnesium</keyword>
<keyword id="KW-0479">Metal-binding</keyword>
<keyword id="KW-0627">Porphyrin biosynthesis</keyword>
<keyword id="KW-0862">Zinc</keyword>
<reference key="1">
    <citation type="journal article" date="1999" name="Nature">
        <title>Genomic sequence comparison of two unrelated isolates of the human gastric pathogen Helicobacter pylori.</title>
        <authorList>
            <person name="Alm R.A."/>
            <person name="Ling L.-S.L."/>
            <person name="Moir D.T."/>
            <person name="King B.L."/>
            <person name="Brown E.D."/>
            <person name="Doig P.C."/>
            <person name="Smith D.R."/>
            <person name="Noonan B."/>
            <person name="Guild B.C."/>
            <person name="deJonge B.L."/>
            <person name="Carmel G."/>
            <person name="Tummino P.J."/>
            <person name="Caruso A."/>
            <person name="Uria-Nickelsen M."/>
            <person name="Mills D.M."/>
            <person name="Ives C."/>
            <person name="Gibson R."/>
            <person name="Merberg D."/>
            <person name="Mills S.D."/>
            <person name="Jiang Q."/>
            <person name="Taylor D.E."/>
            <person name="Vovis G.F."/>
            <person name="Trust T.J."/>
        </authorList>
    </citation>
    <scope>NUCLEOTIDE SEQUENCE [LARGE SCALE GENOMIC DNA]</scope>
    <source>
        <strain>J99 / ATCC 700824</strain>
    </source>
</reference>
<feature type="chain" id="PRO_0000140503" description="Delta-aminolevulinic acid dehydratase">
    <location>
        <begin position="1"/>
        <end position="323"/>
    </location>
</feature>
<feature type="active site" description="Schiff-base intermediate with substrate" evidence="1">
    <location>
        <position position="193"/>
    </location>
</feature>
<feature type="active site" description="Schiff-base intermediate with substrate" evidence="1">
    <location>
        <position position="246"/>
    </location>
</feature>
<feature type="binding site" evidence="1">
    <location>
        <position position="118"/>
    </location>
    <ligand>
        <name>Zn(2+)</name>
        <dbReference type="ChEBI" id="CHEBI:29105"/>
        <note>catalytic</note>
    </ligand>
</feature>
<feature type="binding site" evidence="1">
    <location>
        <position position="120"/>
    </location>
    <ligand>
        <name>Zn(2+)</name>
        <dbReference type="ChEBI" id="CHEBI:29105"/>
        <note>catalytic</note>
    </ligand>
</feature>
<feature type="binding site" evidence="1">
    <location>
        <position position="128"/>
    </location>
    <ligand>
        <name>Zn(2+)</name>
        <dbReference type="ChEBI" id="CHEBI:29105"/>
        <note>catalytic</note>
    </ligand>
</feature>
<feature type="binding site" evidence="1">
    <location>
        <position position="203"/>
    </location>
    <ligand>
        <name>5-aminolevulinate</name>
        <dbReference type="ChEBI" id="CHEBI:356416"/>
        <label>1</label>
    </ligand>
</feature>
<feature type="binding site" evidence="1">
    <location>
        <position position="215"/>
    </location>
    <ligand>
        <name>5-aminolevulinate</name>
        <dbReference type="ChEBI" id="CHEBI:356416"/>
        <label>1</label>
    </ligand>
</feature>
<feature type="binding site" evidence="1">
    <location>
        <position position="231"/>
    </location>
    <ligand>
        <name>Mg(2+)</name>
        <dbReference type="ChEBI" id="CHEBI:18420"/>
    </ligand>
</feature>
<feature type="binding site" evidence="1">
    <location>
        <position position="272"/>
    </location>
    <ligand>
        <name>5-aminolevulinate</name>
        <dbReference type="ChEBI" id="CHEBI:356416"/>
        <label>2</label>
    </ligand>
</feature>
<feature type="binding site" evidence="1">
    <location>
        <position position="311"/>
    </location>
    <ligand>
        <name>5-aminolevulinate</name>
        <dbReference type="ChEBI" id="CHEBI:356416"/>
        <label>2</label>
    </ligand>
</feature>
<protein>
    <recommendedName>
        <fullName>Delta-aminolevulinic acid dehydratase</fullName>
        <shortName>ALAD</shortName>
        <shortName>ALADH</shortName>
        <ecNumber>4.2.1.24</ecNumber>
    </recommendedName>
    <alternativeName>
        <fullName>Porphobilinogen synthase</fullName>
    </alternativeName>
</protein>
<name>HEM2_HELPJ</name>
<organism>
    <name type="scientific">Helicobacter pylori (strain J99 / ATCC 700824)</name>
    <name type="common">Campylobacter pylori J99</name>
    <dbReference type="NCBI Taxonomy" id="85963"/>
    <lineage>
        <taxon>Bacteria</taxon>
        <taxon>Pseudomonadati</taxon>
        <taxon>Campylobacterota</taxon>
        <taxon>Epsilonproteobacteria</taxon>
        <taxon>Campylobacterales</taxon>
        <taxon>Helicobacteraceae</taxon>
        <taxon>Helicobacter</taxon>
    </lineage>
</organism>
<comment type="function">
    <text evidence="1">Catalyzes an early step in the biosynthesis of tetrapyrroles. Binds two molecules of 5-aminolevulinate per subunit, each at a distinct site, and catalyzes their condensation to form porphobilinogen (By similarity).</text>
</comment>
<comment type="catalytic activity">
    <reaction>
        <text>2 5-aminolevulinate = porphobilinogen + 2 H2O + H(+)</text>
        <dbReference type="Rhea" id="RHEA:24064"/>
        <dbReference type="ChEBI" id="CHEBI:15377"/>
        <dbReference type="ChEBI" id="CHEBI:15378"/>
        <dbReference type="ChEBI" id="CHEBI:58126"/>
        <dbReference type="ChEBI" id="CHEBI:356416"/>
        <dbReference type="EC" id="4.2.1.24"/>
    </reaction>
</comment>
<comment type="cofactor">
    <cofactor evidence="1">
        <name>Zn(2+)</name>
        <dbReference type="ChEBI" id="CHEBI:29105"/>
    </cofactor>
    <text evidence="1">Binds 1 zinc ion per monomer.</text>
</comment>
<comment type="pathway">
    <text>Porphyrin-containing compound metabolism; protoporphyrin-IX biosynthesis; coproporphyrinogen-III from 5-aminolevulinate: step 1/4.</text>
</comment>
<comment type="subunit">
    <text evidence="1">Homooctamer.</text>
</comment>
<comment type="similarity">
    <text evidence="2">Belongs to the ALAD family.</text>
</comment>
<evidence type="ECO:0000250" key="1"/>
<evidence type="ECO:0000305" key="2"/>
<proteinExistence type="inferred from homology"/>
<gene>
    <name type="primary">hemB</name>
    <name type="ordered locus">jhp_0150</name>
</gene>
<sequence>MFKRLRRLRSSENLRAMVRETRLNINDFIAPLFVIESDSGIKNEISSMPGVYQMSIEPLLKECEELVGLGIKAVLLFGIPKHKDATGSHALNKDHIVAKATREIKKRFKDLIVIADLCFCEYTDHGHCGILENASVSNDKTLKILNLQGLILAESGVDILAPSNMMDGNVLSLRKALDKAGYFHTPIMSYSTKFASSYYGPFRDVANSPPSFGDRKSYQMDYANQKEALLESLEDEKQGADILMVKPALAYLDIVKEIRDHTLLPLALYNVSGEYAMLKLAQKHNLINYESVLLETMTCFKRAGADMIISYHAKEVANLLQRN</sequence>